<gene>
    <name type="primary">KCTD18</name>
</gene>
<protein>
    <recommendedName>
        <fullName>BTB/POZ domain-containing protein KCTD18</fullName>
    </recommendedName>
</protein>
<evidence type="ECO:0000256" key="1">
    <source>
        <dbReference type="SAM" id="MobiDB-lite"/>
    </source>
</evidence>
<accession>Q29RJ0</accession>
<keyword id="KW-1185">Reference proteome</keyword>
<feature type="chain" id="PRO_0000248595" description="BTB/POZ domain-containing protein KCTD18">
    <location>
        <begin position="1"/>
        <end position="422"/>
    </location>
</feature>
<feature type="domain" description="BTB">
    <location>
        <begin position="12"/>
        <end position="80"/>
    </location>
</feature>
<feature type="region of interest" description="Disordered" evidence="1">
    <location>
        <begin position="289"/>
        <end position="357"/>
    </location>
</feature>
<feature type="region of interest" description="Disordered" evidence="1">
    <location>
        <begin position="376"/>
        <end position="422"/>
    </location>
</feature>
<feature type="compositionally biased region" description="Pro residues" evidence="1">
    <location>
        <begin position="396"/>
        <end position="406"/>
    </location>
</feature>
<feature type="compositionally biased region" description="Polar residues" evidence="1">
    <location>
        <begin position="413"/>
        <end position="422"/>
    </location>
</feature>
<name>KCD18_BOVIN</name>
<sequence>MEGHKAEEEVLDILRLNVGGCIYTARRESLCRFKDSMLASMFSGRFPLKTDESGACVIDRDGHLFKYLLDYLHGEVHIPTEEQTRVALQEEADYFGIPYPYSLSDHLANEMETYSLRSNIELKKALTDFCDSYGLVCNKPTVWVLHYLNTSGASCESRIIGVYSTKTDGTDAIDKQLGGRIHSKSIFKREAGNNVQYIWSDYSVAELKKMMDAFDAWEGKGVSYWRVPHELIECWTLEERPLLGSLSHMAPIRKRRLIVNEEEEEGVNCKTGPKPVRFLGPSTSTQIKVKNSASIRVSPASAPQPWPRATANLAAGGRAVQRSAQSKVPTPVGTGLPEHPQAAQGPGAPENGATHLPPAKVLLSDKTATPHRVIKLRRTPLCATGSSLPACTTPRPAGPPEPPPDALSPLGTWTENGQDQTK</sequence>
<organism>
    <name type="scientific">Bos taurus</name>
    <name type="common">Bovine</name>
    <dbReference type="NCBI Taxonomy" id="9913"/>
    <lineage>
        <taxon>Eukaryota</taxon>
        <taxon>Metazoa</taxon>
        <taxon>Chordata</taxon>
        <taxon>Craniata</taxon>
        <taxon>Vertebrata</taxon>
        <taxon>Euteleostomi</taxon>
        <taxon>Mammalia</taxon>
        <taxon>Eutheria</taxon>
        <taxon>Laurasiatheria</taxon>
        <taxon>Artiodactyla</taxon>
        <taxon>Ruminantia</taxon>
        <taxon>Pecora</taxon>
        <taxon>Bovidae</taxon>
        <taxon>Bovinae</taxon>
        <taxon>Bos</taxon>
    </lineage>
</organism>
<proteinExistence type="evidence at transcript level"/>
<reference key="1">
    <citation type="submission" date="2006-02" db="EMBL/GenBank/DDBJ databases">
        <authorList>
            <consortium name="NIH - Mammalian Gene Collection (MGC) project"/>
        </authorList>
    </citation>
    <scope>NUCLEOTIDE SEQUENCE [LARGE SCALE MRNA]</scope>
    <source>
        <strain>Hereford</strain>
        <tissue>Hypothalamus</tissue>
    </source>
</reference>
<dbReference type="EMBL" id="BC114150">
    <property type="protein sequence ID" value="AAI14151.1"/>
    <property type="molecule type" value="mRNA"/>
</dbReference>
<dbReference type="RefSeq" id="NP_001039979.1">
    <property type="nucleotide sequence ID" value="NM_001046514.1"/>
</dbReference>
<dbReference type="RefSeq" id="XP_005202722.1">
    <property type="nucleotide sequence ID" value="XM_005202665.5"/>
</dbReference>
<dbReference type="SMR" id="Q29RJ0"/>
<dbReference type="FunCoup" id="Q29RJ0">
    <property type="interactions" value="2596"/>
</dbReference>
<dbReference type="STRING" id="9913.ENSBTAP00000002929"/>
<dbReference type="PaxDb" id="9913-ENSBTAP00000002929"/>
<dbReference type="Ensembl" id="ENSBTAT00000002929.6">
    <property type="protein sequence ID" value="ENSBTAP00000002929.5"/>
    <property type="gene ID" value="ENSBTAG00000002272.6"/>
</dbReference>
<dbReference type="GeneID" id="613694"/>
<dbReference type="KEGG" id="bta:613694"/>
<dbReference type="CTD" id="130535"/>
<dbReference type="VEuPathDB" id="HostDB:ENSBTAG00000002272"/>
<dbReference type="VGNC" id="VGNC:30507">
    <property type="gene designation" value="KCTD18"/>
</dbReference>
<dbReference type="eggNOG" id="KOG2723">
    <property type="taxonomic scope" value="Eukaryota"/>
</dbReference>
<dbReference type="GeneTree" id="ENSGT00530000064234"/>
<dbReference type="HOGENOM" id="CLU_052824_0_0_1"/>
<dbReference type="InParanoid" id="Q29RJ0"/>
<dbReference type="OMA" id="CKAGPKP"/>
<dbReference type="OrthoDB" id="2414723at2759"/>
<dbReference type="TreeFam" id="TF315332"/>
<dbReference type="Proteomes" id="UP000009136">
    <property type="component" value="Chromosome 2"/>
</dbReference>
<dbReference type="Bgee" id="ENSBTAG00000002272">
    <property type="expression patterns" value="Expressed in semen and 103 other cell types or tissues"/>
</dbReference>
<dbReference type="GO" id="GO:0051260">
    <property type="term" value="P:protein homooligomerization"/>
    <property type="evidence" value="ECO:0007669"/>
    <property type="project" value="InterPro"/>
</dbReference>
<dbReference type="CDD" id="cd18372">
    <property type="entry name" value="BTB_POZ_KCTD18"/>
    <property type="match status" value="1"/>
</dbReference>
<dbReference type="Gene3D" id="3.30.710.10">
    <property type="entry name" value="Potassium Channel Kv1.1, Chain A"/>
    <property type="match status" value="1"/>
</dbReference>
<dbReference type="InterPro" id="IPR045704">
    <property type="entry name" value="KCTD18_C"/>
</dbReference>
<dbReference type="InterPro" id="IPR011333">
    <property type="entry name" value="SKP1/BTB/POZ_sf"/>
</dbReference>
<dbReference type="InterPro" id="IPR003131">
    <property type="entry name" value="T1-type_BTB"/>
</dbReference>
<dbReference type="PANTHER" id="PTHR14499:SF4">
    <property type="entry name" value="BTB_POZ DOMAIN-CONTAINING PROTEIN KCTD18"/>
    <property type="match status" value="1"/>
</dbReference>
<dbReference type="PANTHER" id="PTHR14499">
    <property type="entry name" value="POTASSIUM CHANNEL TETRAMERIZATION DOMAIN-CONTAINING"/>
    <property type="match status" value="1"/>
</dbReference>
<dbReference type="Pfam" id="PF02214">
    <property type="entry name" value="BTB_2"/>
    <property type="match status" value="1"/>
</dbReference>
<dbReference type="Pfam" id="PF19321">
    <property type="entry name" value="KCTD18_C"/>
    <property type="match status" value="1"/>
</dbReference>
<dbReference type="SUPFAM" id="SSF54695">
    <property type="entry name" value="POZ domain"/>
    <property type="match status" value="1"/>
</dbReference>